<protein>
    <recommendedName>
        <fullName>Putative uncharacterized protein YLL059C</fullName>
    </recommendedName>
</protein>
<name>YL059_YEAST</name>
<organism>
    <name type="scientific">Saccharomyces cerevisiae (strain ATCC 204508 / S288c)</name>
    <name type="common">Baker's yeast</name>
    <dbReference type="NCBI Taxonomy" id="559292"/>
    <lineage>
        <taxon>Eukaryota</taxon>
        <taxon>Fungi</taxon>
        <taxon>Dikarya</taxon>
        <taxon>Ascomycota</taxon>
        <taxon>Saccharomycotina</taxon>
        <taxon>Saccharomycetes</taxon>
        <taxon>Saccharomycetales</taxon>
        <taxon>Saccharomycetaceae</taxon>
        <taxon>Saccharomyces</taxon>
    </lineage>
</organism>
<evidence type="ECO:0000255" key="1"/>
<evidence type="ECO:0000305" key="2"/>
<evidence type="ECO:0000305" key="3">
    <source>
    </source>
</evidence>
<reference key="1">
    <citation type="journal article" date="1997" name="Nature">
        <title>The nucleotide sequence of Saccharomyces cerevisiae chromosome XII.</title>
        <authorList>
            <person name="Johnston M."/>
            <person name="Hillier L.W."/>
            <person name="Riles L."/>
            <person name="Albermann K."/>
            <person name="Andre B."/>
            <person name="Ansorge W."/>
            <person name="Benes V."/>
            <person name="Brueckner M."/>
            <person name="Delius H."/>
            <person name="Dubois E."/>
            <person name="Duesterhoeft A."/>
            <person name="Entian K.-D."/>
            <person name="Floeth M."/>
            <person name="Goffeau A."/>
            <person name="Hebling U."/>
            <person name="Heumann K."/>
            <person name="Heuss-Neitzel D."/>
            <person name="Hilbert H."/>
            <person name="Hilger F."/>
            <person name="Kleine K."/>
            <person name="Koetter P."/>
            <person name="Louis E.J."/>
            <person name="Messenguy F."/>
            <person name="Mewes H.-W."/>
            <person name="Miosga T."/>
            <person name="Moestl D."/>
            <person name="Mueller-Auer S."/>
            <person name="Nentwich U."/>
            <person name="Obermaier B."/>
            <person name="Piravandi E."/>
            <person name="Pohl T.M."/>
            <person name="Portetelle D."/>
            <person name="Purnelle B."/>
            <person name="Rechmann S."/>
            <person name="Rieger M."/>
            <person name="Rinke M."/>
            <person name="Rose M."/>
            <person name="Scharfe M."/>
            <person name="Scherens B."/>
            <person name="Scholler P."/>
            <person name="Schwager C."/>
            <person name="Schwarz S."/>
            <person name="Underwood A.P."/>
            <person name="Urrestarazu L.A."/>
            <person name="Vandenbol M."/>
            <person name="Verhasselt P."/>
            <person name="Vierendeels F."/>
            <person name="Voet M."/>
            <person name="Volckaert G."/>
            <person name="Voss H."/>
            <person name="Wambutt R."/>
            <person name="Wedler E."/>
            <person name="Wedler H."/>
            <person name="Zimmermann F.K."/>
            <person name="Zollner A."/>
            <person name="Hani J."/>
            <person name="Hoheisel J.D."/>
        </authorList>
    </citation>
    <scope>NUCLEOTIDE SEQUENCE [LARGE SCALE GENOMIC DNA]</scope>
    <source>
        <strain>ATCC 204508 / S288c</strain>
    </source>
</reference>
<reference key="2">
    <citation type="journal article" date="2014" name="G3 (Bethesda)">
        <title>The reference genome sequence of Saccharomyces cerevisiae: Then and now.</title>
        <authorList>
            <person name="Engel S.R."/>
            <person name="Dietrich F.S."/>
            <person name="Fisk D.G."/>
            <person name="Binkley G."/>
            <person name="Balakrishnan R."/>
            <person name="Costanzo M.C."/>
            <person name="Dwight S.S."/>
            <person name="Hitz B.C."/>
            <person name="Karra K."/>
            <person name="Nash R.S."/>
            <person name="Weng S."/>
            <person name="Wong E.D."/>
            <person name="Lloyd P."/>
            <person name="Skrzypek M.S."/>
            <person name="Miyasato S.R."/>
            <person name="Simison M."/>
            <person name="Cherry J.M."/>
        </authorList>
    </citation>
    <scope>GENOME REANNOTATION</scope>
    <source>
        <strain>ATCC 204508 / S288c</strain>
    </source>
</reference>
<reference key="3">
    <citation type="journal article" date="2007" name="Genome Res.">
        <title>Approaching a complete repository of sequence-verified protein-encoding clones for Saccharomyces cerevisiae.</title>
        <authorList>
            <person name="Hu Y."/>
            <person name="Rolfs A."/>
            <person name="Bhullar B."/>
            <person name="Murthy T.V.S."/>
            <person name="Zhu C."/>
            <person name="Berger M.F."/>
            <person name="Camargo A.A."/>
            <person name="Kelley F."/>
            <person name="McCarron S."/>
            <person name="Jepson D."/>
            <person name="Richardson A."/>
            <person name="Raphael J."/>
            <person name="Moreira D."/>
            <person name="Taycher E."/>
            <person name="Zuo D."/>
            <person name="Mohr S."/>
            <person name="Kane M.F."/>
            <person name="Williamson J."/>
            <person name="Simpson A.J.G."/>
            <person name="Bulyk M.L."/>
            <person name="Harlow E."/>
            <person name="Marsischky G."/>
            <person name="Kolodner R.D."/>
            <person name="LaBaer J."/>
        </authorList>
    </citation>
    <scope>NUCLEOTIDE SEQUENCE [GENOMIC DNA]</scope>
    <source>
        <strain>ATCC 204508 / S288c</strain>
    </source>
</reference>
<dbReference type="EMBL" id="Z47973">
    <property type="protein sequence ID" value="CAA87998.1"/>
    <property type="molecule type" value="Genomic_DNA"/>
</dbReference>
<dbReference type="EMBL" id="Z73164">
    <property type="protein sequence ID" value="CAA97512.1"/>
    <property type="molecule type" value="Genomic_DNA"/>
</dbReference>
<dbReference type="EMBL" id="AY558195">
    <property type="protein sequence ID" value="AAS56521.1"/>
    <property type="molecule type" value="Genomic_DNA"/>
</dbReference>
<dbReference type="PIR" id="S50961">
    <property type="entry name" value="S50961"/>
</dbReference>
<dbReference type="DIP" id="DIP-2123N"/>
<dbReference type="STRING" id="4932.YLL059C"/>
<dbReference type="PaxDb" id="4932-YLL059C"/>
<dbReference type="EnsemblFungi" id="YLL059C_mRNA">
    <property type="protein sequence ID" value="YLL059C"/>
    <property type="gene ID" value="YLL059C"/>
</dbReference>
<dbReference type="AGR" id="SGD:S000003982"/>
<dbReference type="SGD" id="S000003982">
    <property type="gene designation" value="YLL059C"/>
</dbReference>
<dbReference type="HOGENOM" id="CLU_1705635_0_0_1"/>
<dbReference type="GO" id="GO:0016020">
    <property type="term" value="C:membrane"/>
    <property type="evidence" value="ECO:0007669"/>
    <property type="project" value="UniProtKB-SubCell"/>
</dbReference>
<proteinExistence type="uncertain"/>
<keyword id="KW-0472">Membrane</keyword>
<keyword id="KW-0812">Transmembrane</keyword>
<keyword id="KW-1133">Transmembrane helix</keyword>
<comment type="subcellular location">
    <subcellularLocation>
        <location evidence="2">Membrane</location>
        <topology evidence="2">Multi-pass membrane protein</topology>
    </subcellularLocation>
</comment>
<comment type="caution">
    <text evidence="3">Product of a dubious gene prediction unlikely to encode a functional protein. Because of that it is not part of the S.cerevisiae S288c complete/reference proteome set.</text>
</comment>
<feature type="chain" id="PRO_0000299607" description="Putative uncharacterized protein YLL059C">
    <location>
        <begin position="1"/>
        <end position="168"/>
    </location>
</feature>
<feature type="transmembrane region" description="Helical" evidence="1">
    <location>
        <begin position="27"/>
        <end position="47"/>
    </location>
</feature>
<feature type="transmembrane region" description="Helical" evidence="1">
    <location>
        <begin position="147"/>
        <end position="167"/>
    </location>
</feature>
<gene>
    <name type="ordered locus">YLL059C</name>
    <name type="ORF">L0563</name>
</gene>
<sequence length="168" mass="19283">MCMCVVLVYFSILLDKGTKVLYTHDNNWLVILVFYFLAFGSIMRISGRTCSEEMKKSFGQASYHNGLQNFSKESPVGVNLEKKKTHISCCIILATQRFLQKFSNKRLGNPHLHPTRESTFSRELATENNSGNFPVLLRYHIFRQLDIENGILLCQVLQALIIVQVMFS</sequence>
<accession>Q12336</accession>